<keyword id="KW-0025">Alternative splicing</keyword>
<keyword id="KW-0150">Chloroplast</keyword>
<keyword id="KW-0328">Glycosyltransferase</keyword>
<keyword id="KW-0472">Membrane</keyword>
<keyword id="KW-0934">Plastid</keyword>
<keyword id="KW-1002">Plastid outer membrane</keyword>
<keyword id="KW-1185">Reference proteome</keyword>
<keyword id="KW-0808">Transferase</keyword>
<keyword id="KW-0809">Transit peptide</keyword>
<reference key="1">
    <citation type="journal article" date="1999" name="Science">
        <title>Arabidopsis galactolipid biosynthesis and lipid trafficking mediated by DGD1.</title>
        <authorList>
            <person name="Doermann P."/>
            <person name="Balbo I."/>
            <person name="Benning C."/>
        </authorList>
    </citation>
    <scope>NUCLEOTIDE SEQUENCE [GENOMIC DNA / MRNA]</scope>
    <scope>FUNCTION</scope>
    <scope>DISRUPTION PHENOTYPE</scope>
    <scope>MUTAGENESIS OF 640-TYR--TRP-808</scope>
</reference>
<reference key="2">
    <citation type="journal article" date="2014" name="Plant J.">
        <title>The plant glycosyltransferase clone collection for functional genomics.</title>
        <authorList>
            <person name="Lao J."/>
            <person name="Oikawa A."/>
            <person name="Bromley J.R."/>
            <person name="McInerney P."/>
            <person name="Suttangkakul A."/>
            <person name="Smith-Moritz A.M."/>
            <person name="Plahar H."/>
            <person name="Chiu T.-Y."/>
            <person name="Gonzalez Fernandez-Nino S.M.G."/>
            <person name="Ebert B."/>
            <person name="Yang F."/>
            <person name="Christiansen K.M."/>
            <person name="Hansen S.F."/>
            <person name="Stonebloom S."/>
            <person name="Adams P.D."/>
            <person name="Ronald P.C."/>
            <person name="Hillson N.J."/>
            <person name="Hadi M.Z."/>
            <person name="Vega-Sanchez M.E."/>
            <person name="Loque D."/>
            <person name="Scheller H.V."/>
            <person name="Heazlewood J.L."/>
        </authorList>
    </citation>
    <scope>NUCLEOTIDE SEQUENCE [MRNA]</scope>
</reference>
<reference key="3">
    <citation type="journal article" date="2000" name="Nature">
        <title>Sequence and analysis of chromosome 3 of the plant Arabidopsis thaliana.</title>
        <authorList>
            <person name="Salanoubat M."/>
            <person name="Lemcke K."/>
            <person name="Rieger M."/>
            <person name="Ansorge W."/>
            <person name="Unseld M."/>
            <person name="Fartmann B."/>
            <person name="Valle G."/>
            <person name="Bloecker H."/>
            <person name="Perez-Alonso M."/>
            <person name="Obermaier B."/>
            <person name="Delseny M."/>
            <person name="Boutry M."/>
            <person name="Grivell L.A."/>
            <person name="Mache R."/>
            <person name="Puigdomenech P."/>
            <person name="De Simone V."/>
            <person name="Choisne N."/>
            <person name="Artiguenave F."/>
            <person name="Robert C."/>
            <person name="Brottier P."/>
            <person name="Wincker P."/>
            <person name="Cattolico L."/>
            <person name="Weissenbach J."/>
            <person name="Saurin W."/>
            <person name="Quetier F."/>
            <person name="Schaefer M."/>
            <person name="Mueller-Auer S."/>
            <person name="Gabel C."/>
            <person name="Fuchs M."/>
            <person name="Benes V."/>
            <person name="Wurmbach E."/>
            <person name="Drzonek H."/>
            <person name="Erfle H."/>
            <person name="Jordan N."/>
            <person name="Bangert S."/>
            <person name="Wiedelmann R."/>
            <person name="Kranz H."/>
            <person name="Voss H."/>
            <person name="Holland R."/>
            <person name="Brandt P."/>
            <person name="Nyakatura G."/>
            <person name="Vezzi A."/>
            <person name="D'Angelo M."/>
            <person name="Pallavicini A."/>
            <person name="Toppo S."/>
            <person name="Simionati B."/>
            <person name="Conrad A."/>
            <person name="Hornischer K."/>
            <person name="Kauer G."/>
            <person name="Loehnert T.-H."/>
            <person name="Nordsiek G."/>
            <person name="Reichelt J."/>
            <person name="Scharfe M."/>
            <person name="Schoen O."/>
            <person name="Bargues M."/>
            <person name="Terol J."/>
            <person name="Climent J."/>
            <person name="Navarro P."/>
            <person name="Collado C."/>
            <person name="Perez-Perez A."/>
            <person name="Ottenwaelder B."/>
            <person name="Duchemin D."/>
            <person name="Cooke R."/>
            <person name="Laudie M."/>
            <person name="Berger-Llauro C."/>
            <person name="Purnelle B."/>
            <person name="Masuy D."/>
            <person name="de Haan M."/>
            <person name="Maarse A.C."/>
            <person name="Alcaraz J.-P."/>
            <person name="Cottet A."/>
            <person name="Casacuberta E."/>
            <person name="Monfort A."/>
            <person name="Argiriou A."/>
            <person name="Flores M."/>
            <person name="Liguori R."/>
            <person name="Vitale D."/>
            <person name="Mannhaupt G."/>
            <person name="Haase D."/>
            <person name="Schoof H."/>
            <person name="Rudd S."/>
            <person name="Zaccaria P."/>
            <person name="Mewes H.-W."/>
            <person name="Mayer K.F.X."/>
            <person name="Kaul S."/>
            <person name="Town C.D."/>
            <person name="Koo H.L."/>
            <person name="Tallon L.J."/>
            <person name="Jenkins J."/>
            <person name="Rooney T."/>
            <person name="Rizzo M."/>
            <person name="Walts A."/>
            <person name="Utterback T."/>
            <person name="Fujii C.Y."/>
            <person name="Shea T.P."/>
            <person name="Creasy T.H."/>
            <person name="Haas B."/>
            <person name="Maiti R."/>
            <person name="Wu D."/>
            <person name="Peterson J."/>
            <person name="Van Aken S."/>
            <person name="Pai G."/>
            <person name="Militscher J."/>
            <person name="Sellers P."/>
            <person name="Gill J.E."/>
            <person name="Feldblyum T.V."/>
            <person name="Preuss D."/>
            <person name="Lin X."/>
            <person name="Nierman W.C."/>
            <person name="Salzberg S.L."/>
            <person name="White O."/>
            <person name="Venter J.C."/>
            <person name="Fraser C.M."/>
            <person name="Kaneko T."/>
            <person name="Nakamura Y."/>
            <person name="Sato S."/>
            <person name="Kato T."/>
            <person name="Asamizu E."/>
            <person name="Sasamoto S."/>
            <person name="Kimura T."/>
            <person name="Idesawa K."/>
            <person name="Kawashima K."/>
            <person name="Kishida Y."/>
            <person name="Kiyokawa C."/>
            <person name="Kohara M."/>
            <person name="Matsumoto M."/>
            <person name="Matsuno A."/>
            <person name="Muraki A."/>
            <person name="Nakayama S."/>
            <person name="Nakazaki N."/>
            <person name="Shinpo S."/>
            <person name="Takeuchi C."/>
            <person name="Wada T."/>
            <person name="Watanabe A."/>
            <person name="Yamada M."/>
            <person name="Yasuda M."/>
            <person name="Tabata S."/>
        </authorList>
    </citation>
    <scope>NUCLEOTIDE SEQUENCE [LARGE SCALE GENOMIC DNA]</scope>
    <source>
        <strain>cv. Columbia</strain>
    </source>
</reference>
<reference key="4">
    <citation type="journal article" date="2017" name="Plant J.">
        <title>Araport11: a complete reannotation of the Arabidopsis thaliana reference genome.</title>
        <authorList>
            <person name="Cheng C.Y."/>
            <person name="Krishnakumar V."/>
            <person name="Chan A.P."/>
            <person name="Thibaud-Nissen F."/>
            <person name="Schobel S."/>
            <person name="Town C.D."/>
        </authorList>
    </citation>
    <scope>GENOME REANNOTATION</scope>
    <source>
        <strain>cv. Columbia</strain>
    </source>
</reference>
<reference key="5">
    <citation type="journal article" date="2003" name="Science">
        <title>Empirical analysis of transcriptional activity in the Arabidopsis genome.</title>
        <authorList>
            <person name="Yamada K."/>
            <person name="Lim J."/>
            <person name="Dale J.M."/>
            <person name="Chen H."/>
            <person name="Shinn P."/>
            <person name="Palm C.J."/>
            <person name="Southwick A.M."/>
            <person name="Wu H.C."/>
            <person name="Kim C.J."/>
            <person name="Nguyen M."/>
            <person name="Pham P.K."/>
            <person name="Cheuk R.F."/>
            <person name="Karlin-Newmann G."/>
            <person name="Liu S.X."/>
            <person name="Lam B."/>
            <person name="Sakano H."/>
            <person name="Wu T."/>
            <person name="Yu G."/>
            <person name="Miranda M."/>
            <person name="Quach H.L."/>
            <person name="Tripp M."/>
            <person name="Chang C.H."/>
            <person name="Lee J.M."/>
            <person name="Toriumi M.J."/>
            <person name="Chan M.M."/>
            <person name="Tang C.C."/>
            <person name="Onodera C.S."/>
            <person name="Deng J.M."/>
            <person name="Akiyama K."/>
            <person name="Ansari Y."/>
            <person name="Arakawa T."/>
            <person name="Banh J."/>
            <person name="Banno F."/>
            <person name="Bowser L."/>
            <person name="Brooks S.Y."/>
            <person name="Carninci P."/>
            <person name="Chao Q."/>
            <person name="Choy N."/>
            <person name="Enju A."/>
            <person name="Goldsmith A.D."/>
            <person name="Gurjal M."/>
            <person name="Hansen N.F."/>
            <person name="Hayashizaki Y."/>
            <person name="Johnson-Hopson C."/>
            <person name="Hsuan V.W."/>
            <person name="Iida K."/>
            <person name="Karnes M."/>
            <person name="Khan S."/>
            <person name="Koesema E."/>
            <person name="Ishida J."/>
            <person name="Jiang P.X."/>
            <person name="Jones T."/>
            <person name="Kawai J."/>
            <person name="Kamiya A."/>
            <person name="Meyers C."/>
            <person name="Nakajima M."/>
            <person name="Narusaka M."/>
            <person name="Seki M."/>
            <person name="Sakurai T."/>
            <person name="Satou M."/>
            <person name="Tamse R."/>
            <person name="Vaysberg M."/>
            <person name="Wallender E.K."/>
            <person name="Wong C."/>
            <person name="Yamamura Y."/>
            <person name="Yuan S."/>
            <person name="Shinozaki K."/>
            <person name="Davis R.W."/>
            <person name="Theologis A."/>
            <person name="Ecker J.R."/>
        </authorList>
    </citation>
    <scope>NUCLEOTIDE SEQUENCE [LARGE SCALE MRNA]</scope>
    <source>
        <strain>cv. Columbia</strain>
    </source>
</reference>
<reference key="6">
    <citation type="journal article" date="2001" name="J. Biol. Chem.">
        <title>The digalactosyldiacylglycerol (DGDG) synthase DGD1 is inserted into the outer envelope membrane of chloroplasts in a manner independent of the general import pathway and does not depend on direct interaction with monogalactosyldiacylglycerol synthase for DGDG biosynthesis.</title>
        <authorList>
            <person name="Froehlich J.E."/>
            <person name="Benning C."/>
            <person name="Doermann P."/>
        </authorList>
    </citation>
    <scope>SUBCELLULAR LOCATION</scope>
</reference>
<reference key="7">
    <citation type="journal article" date="2003" name="Plant Cell">
        <title>Disruption of the two digalactosyldiacylglycerol synthase genes DGD1 and DGD2 in Arabidopsis reveals the existence of an additional enzyme of galactolipid synthesis.</title>
        <authorList>
            <person name="Kelly A.A."/>
            <person name="Froehlich J.E."/>
            <person name="Doermann P."/>
        </authorList>
    </citation>
    <scope>INDUCTION</scope>
    <scope>FUNCTION</scope>
</reference>
<reference key="8">
    <citation type="journal article" date="2005" name="FEBS Lett.">
        <title>Decreased stability of photosystem I in dgd1 mutant of Arabidopsis thaliana.</title>
        <authorList>
            <person name="Guo J."/>
            <person name="Zhang Z."/>
            <person name="Bi Y."/>
            <person name="Yang W."/>
            <person name="Xu Y."/>
            <person name="Zhang L."/>
        </authorList>
    </citation>
    <scope>FUNCTION</scope>
</reference>
<reference key="9">
    <citation type="journal article" date="2006" name="Plant Cell Physiol.">
        <title>Digalactosyl-diacylglycerol deficiency impairs the capacity for photosynthetic intersystem electron transport and state transitions in Arabidopsis thaliana due to photosystem I acceptor-side limitations.</title>
        <authorList>
            <person name="Ivanov A.G."/>
            <person name="Hendrickson L."/>
            <person name="Krol M."/>
            <person name="Selstam E."/>
            <person name="Oquist G."/>
            <person name="Hurry V."/>
            <person name="Huner N.P."/>
        </authorList>
    </citation>
    <scope>FUNCTION</scope>
</reference>
<reference key="10">
    <citation type="journal article" date="2010" name="Plant Physiol.">
        <title>Phosphate regulation of lipid biosynthesis in Arabidopsis is independent of the mitochondrial outer membrane DGS1 complex.</title>
        <authorList>
            <person name="Moellering E.R."/>
            <person name="Benning C."/>
        </authorList>
    </citation>
    <scope>FUNCTION</scope>
    <scope>DISRUPTION PHENOTYPE</scope>
    <source>
        <strain>cv. Col-2</strain>
    </source>
</reference>
<dbReference type="EC" id="2.4.1.241" evidence="1"/>
<dbReference type="EMBL" id="AF149842">
    <property type="protein sequence ID" value="AAD42379.1"/>
    <property type="molecule type" value="Genomic_DNA"/>
</dbReference>
<dbReference type="EMBL" id="AF149841">
    <property type="protein sequence ID" value="AAD42378.1"/>
    <property type="molecule type" value="mRNA"/>
</dbReference>
<dbReference type="EMBL" id="KJ138827">
    <property type="protein sequence ID" value="AHL38767.1"/>
    <property type="molecule type" value="mRNA"/>
</dbReference>
<dbReference type="EMBL" id="AC009918">
    <property type="protein sequence ID" value="AAF02140.1"/>
    <property type="molecule type" value="Genomic_DNA"/>
</dbReference>
<dbReference type="EMBL" id="CP002686">
    <property type="protein sequence ID" value="AEE75081.1"/>
    <property type="molecule type" value="Genomic_DNA"/>
</dbReference>
<dbReference type="EMBL" id="CP002686">
    <property type="protein sequence ID" value="AEE75082.1"/>
    <property type="molecule type" value="Genomic_DNA"/>
</dbReference>
<dbReference type="EMBL" id="AY101521">
    <property type="protein sequence ID" value="AAM26642.1"/>
    <property type="molecule type" value="mRNA"/>
</dbReference>
<dbReference type="EMBL" id="AY075649">
    <property type="protein sequence ID" value="AAL77656.1"/>
    <property type="molecule type" value="mRNA"/>
</dbReference>
<dbReference type="RefSeq" id="NP_187773.1">
    <molecule id="Q9S7D1-1"/>
    <property type="nucleotide sequence ID" value="NM_111999.4"/>
</dbReference>
<dbReference type="RefSeq" id="NP_850561.1">
    <molecule id="Q9S7D1-2"/>
    <property type="nucleotide sequence ID" value="NM_180230.1"/>
</dbReference>
<dbReference type="SMR" id="Q9S7D1"/>
<dbReference type="FunCoup" id="Q9S7D1">
    <property type="interactions" value="455"/>
</dbReference>
<dbReference type="IntAct" id="Q9S7D1">
    <property type="interactions" value="2"/>
</dbReference>
<dbReference type="STRING" id="3702.Q9S7D1"/>
<dbReference type="SwissLipids" id="SLP:000001451"/>
<dbReference type="CAZy" id="GT4">
    <property type="family name" value="Glycosyltransferase Family 4"/>
</dbReference>
<dbReference type="iPTMnet" id="Q9S7D1"/>
<dbReference type="PaxDb" id="3702-AT3G11670.1"/>
<dbReference type="ProteomicsDB" id="224036">
    <molecule id="Q9S7D1-1"/>
</dbReference>
<dbReference type="EnsemblPlants" id="AT3G11670.1">
    <molecule id="Q9S7D1-1"/>
    <property type="protein sequence ID" value="AT3G11670.1"/>
    <property type="gene ID" value="AT3G11670"/>
</dbReference>
<dbReference type="EnsemblPlants" id="AT3G11670.2">
    <molecule id="Q9S7D1-2"/>
    <property type="protein sequence ID" value="AT3G11670.2"/>
    <property type="gene ID" value="AT3G11670"/>
</dbReference>
<dbReference type="GeneID" id="820339"/>
<dbReference type="Gramene" id="AT3G11670.1">
    <molecule id="Q9S7D1-1"/>
    <property type="protein sequence ID" value="AT3G11670.1"/>
    <property type="gene ID" value="AT3G11670"/>
</dbReference>
<dbReference type="Gramene" id="AT3G11670.2">
    <molecule id="Q9S7D1-2"/>
    <property type="protein sequence ID" value="AT3G11670.2"/>
    <property type="gene ID" value="AT3G11670"/>
</dbReference>
<dbReference type="KEGG" id="ath:AT3G11670"/>
<dbReference type="Araport" id="AT3G11670"/>
<dbReference type="TAIR" id="AT3G11670">
    <property type="gene designation" value="DGD1"/>
</dbReference>
<dbReference type="eggNOG" id="ENOG502QQ73">
    <property type="taxonomic scope" value="Eukaryota"/>
</dbReference>
<dbReference type="HOGENOM" id="CLU_011647_0_1_1"/>
<dbReference type="InParanoid" id="Q9S7D1"/>
<dbReference type="OMA" id="DHAKHDP"/>
<dbReference type="OrthoDB" id="44480at2759"/>
<dbReference type="PhylomeDB" id="Q9S7D1"/>
<dbReference type="BioCyc" id="MetaCyc:AT3G11670-MONOMER"/>
<dbReference type="BRENDA" id="2.4.1.241">
    <property type="organism ID" value="399"/>
</dbReference>
<dbReference type="PRO" id="PR:Q9S7D1"/>
<dbReference type="Proteomes" id="UP000006548">
    <property type="component" value="Chromosome 3"/>
</dbReference>
<dbReference type="ExpressionAtlas" id="Q9S7D1">
    <property type="expression patterns" value="baseline and differential"/>
</dbReference>
<dbReference type="GO" id="GO:0009707">
    <property type="term" value="C:chloroplast outer membrane"/>
    <property type="evidence" value="ECO:0000314"/>
    <property type="project" value="TAIR"/>
</dbReference>
<dbReference type="GO" id="GO:0005739">
    <property type="term" value="C:mitochondrion"/>
    <property type="evidence" value="ECO:0007005"/>
    <property type="project" value="TAIR"/>
</dbReference>
<dbReference type="GO" id="GO:0046481">
    <property type="term" value="F:digalactosyldiacylglycerol synthase activity"/>
    <property type="evidence" value="ECO:0007669"/>
    <property type="project" value="UniProtKB-EC"/>
</dbReference>
<dbReference type="GO" id="GO:0016757">
    <property type="term" value="F:glycosyltransferase activity"/>
    <property type="evidence" value="ECO:0000315"/>
    <property type="project" value="TAIR"/>
</dbReference>
<dbReference type="GO" id="GO:0035250">
    <property type="term" value="F:UDP-galactosyltransferase activity"/>
    <property type="evidence" value="ECO:0000304"/>
    <property type="project" value="TAIR"/>
</dbReference>
<dbReference type="GO" id="GO:0019375">
    <property type="term" value="P:galactolipid biosynthetic process"/>
    <property type="evidence" value="ECO:0000314"/>
    <property type="project" value="TAIR"/>
</dbReference>
<dbReference type="GO" id="GO:0009867">
    <property type="term" value="P:jasmonic acid mediated signaling pathway"/>
    <property type="evidence" value="ECO:0000315"/>
    <property type="project" value="TAIR"/>
</dbReference>
<dbReference type="GO" id="GO:0009809">
    <property type="term" value="P:lignin biosynthetic process"/>
    <property type="evidence" value="ECO:0000315"/>
    <property type="project" value="TAIR"/>
</dbReference>
<dbReference type="GO" id="GO:0031408">
    <property type="term" value="P:oxylipin biosynthetic process"/>
    <property type="evidence" value="ECO:0000315"/>
    <property type="project" value="TAIR"/>
</dbReference>
<dbReference type="GO" id="GO:0042550">
    <property type="term" value="P:photosystem I stabilization"/>
    <property type="evidence" value="ECO:0000304"/>
    <property type="project" value="TAIR"/>
</dbReference>
<dbReference type="GO" id="GO:0009266">
    <property type="term" value="P:response to temperature stimulus"/>
    <property type="evidence" value="ECO:0000315"/>
    <property type="project" value="TAIR"/>
</dbReference>
<dbReference type="CDD" id="cd01635">
    <property type="entry name" value="Glycosyltransferase_GTB-type"/>
    <property type="match status" value="1"/>
</dbReference>
<dbReference type="FunFam" id="3.40.50.2000:FF:000325">
    <property type="entry name" value="Digalactosyldiacylglycerol synthase 1, chloroplastic"/>
    <property type="match status" value="1"/>
</dbReference>
<dbReference type="FunFam" id="3.40.50.2000:FF:000218">
    <property type="entry name" value="Digalactosyldiacylglycerol synthase 1, chloroplastic-like"/>
    <property type="match status" value="1"/>
</dbReference>
<dbReference type="Gene3D" id="3.40.50.2000">
    <property type="entry name" value="Glycogen Phosphorylase B"/>
    <property type="match status" value="2"/>
</dbReference>
<dbReference type="InterPro" id="IPR044525">
    <property type="entry name" value="DGDG1/2"/>
</dbReference>
<dbReference type="InterPro" id="IPR001296">
    <property type="entry name" value="Glyco_trans_1"/>
</dbReference>
<dbReference type="PANTHER" id="PTHR46132:SF6">
    <property type="entry name" value="DIGALACTOSYLDIACYLGLYCEROL SYNTHASE 1, CHLOROPLASTIC"/>
    <property type="match status" value="1"/>
</dbReference>
<dbReference type="PANTHER" id="PTHR46132">
    <property type="entry name" value="DIGALACTOSYLDIACYLGLYCEROL SYNTHASE 2, CHLOROPLASTIC"/>
    <property type="match status" value="1"/>
</dbReference>
<dbReference type="Pfam" id="PF00534">
    <property type="entry name" value="Glycos_transf_1"/>
    <property type="match status" value="1"/>
</dbReference>
<dbReference type="SUPFAM" id="SSF53756">
    <property type="entry name" value="UDP-Glycosyltransferase/glycogen phosphorylase"/>
    <property type="match status" value="1"/>
</dbReference>
<sequence>MVKETLIPPSSTSMTTGTSSSSSLSMTLSSTNALSFLSKGWREVWDSADADLQLMRDRANSVKNLASTFDREIENFLNNSARSAFPVGSPSASSFSNEIGIMKKLQPKISEFRRVYSAPEISRKVMERWGPARAKLGMDLSAIKKAIVSEMELDERQGVLEMSRLRRRRNSDRVRFTEFFAEAERDGEAYFGDWEPIRSLKSRFKEFEKRSSLEILSGFKNSEFVEKLKTSFKSIYKETDEAKDVPPLDVPELLACLVRQSEPFLDQIGVRKDTCDRIVESLCKCKSQQLWRLPSAQASDLIENDNHGVDLDMRIASVLQSTGHHYDGGFWTDFVKPETPENKRHVAIVTTASLPWMTGTAVNPLFRAAYLAKAAKQSVTLVVPWLCESDQELVYPNNLTFSSPEEQESYIRKWLEERIGFKADFKISFYPGKFSKERRSIFPAGDTSQFISSKDADIAILEEPEHLNWYYHGKRWTDKFNHVVGIVHTNYLEYIKREKNGALQAFFVNHVNNWVTRAYCDKVLRLSAATQDLPKSVVCNVHGVNPKFLMIGEKIAEERSRGEQAFSKGAYFLGKMVWAKGYRELIDLMAKHKSELGSFNLDVYGNGEDAVEVQRAAKKHDLNLNFLKGRDHADDALHKYKVFINPSISDVLCTATAEALAMGKFVVCADHPSNEFFRSFPNCLTYKTSEDFVSKVQEAMTKEPLPLTPEQMYNLSWEAATQRFMEYSDLDKILNNGEGGRKMRKSRSVPSFNEVVDGGLAFSHYVLTGNDFLRLCTGATPRTKDYDNQHCKDLNLVPPHVHKPIFGW</sequence>
<evidence type="ECO:0000250" key="1">
    <source>
        <dbReference type="UniProtKB" id="Q8W1S1"/>
    </source>
</evidence>
<evidence type="ECO:0000255" key="2"/>
<evidence type="ECO:0000256" key="3">
    <source>
        <dbReference type="SAM" id="MobiDB-lite"/>
    </source>
</evidence>
<evidence type="ECO:0000269" key="4">
    <source>
    </source>
</evidence>
<evidence type="ECO:0000269" key="5">
    <source>
    </source>
</evidence>
<evidence type="ECO:0000269" key="6">
    <source>
    </source>
</evidence>
<evidence type="ECO:0000269" key="7">
    <source>
    </source>
</evidence>
<evidence type="ECO:0000269" key="8">
    <source>
    </source>
</evidence>
<evidence type="ECO:0000269" key="9">
    <source>
    </source>
</evidence>
<evidence type="ECO:0000303" key="10">
    <source>
    </source>
</evidence>
<evidence type="ECO:0000305" key="11"/>
<evidence type="ECO:0000312" key="12">
    <source>
        <dbReference type="Araport" id="AT3G11670"/>
    </source>
</evidence>
<evidence type="ECO:0000312" key="13">
    <source>
        <dbReference type="EMBL" id="AAF02140.1"/>
    </source>
</evidence>
<comment type="function">
    <text evidence="4 6 7 8 9">Involved in the synthesis of diacylglycerol galactolipids that are specifically found in thylakoid membranes (PubMed:10381884, PubMed:14600212, PubMed:20181751). Specific for alpha-glycosidic linkages (PubMed:10381884, PubMed:14600212). Responsible for the final assembly of galactolipids in photosynthetic membranes. Digalactosyldiacylglycerol (DGDG) provides stability to the photosystem I (PSI) complex, especially to the PsaA, PsaB, PsaC, PsaL and PsaH subunits (PubMed:15961080, PubMed:16854937).</text>
</comment>
<comment type="catalytic activity">
    <reaction evidence="1">
        <text>a 1,2-diacyl-3-O-(beta-D-galactosyl)-sn-glycerol + UDP-alpha-D-galactose = a 1,2-diacyl-3-O-[alpha-D-galactosyl-(1-&gt;6)-beta-D-galactosyl]-sn-glycerol + UDP + H(+)</text>
        <dbReference type="Rhea" id="RHEA:10520"/>
        <dbReference type="ChEBI" id="CHEBI:15378"/>
        <dbReference type="ChEBI" id="CHEBI:17615"/>
        <dbReference type="ChEBI" id="CHEBI:28396"/>
        <dbReference type="ChEBI" id="CHEBI:58223"/>
        <dbReference type="ChEBI" id="CHEBI:66914"/>
        <dbReference type="EC" id="2.4.1.241"/>
    </reaction>
</comment>
<comment type="subcellular location">
    <subcellularLocation>
        <location evidence="5">Plastid</location>
        <location evidence="5">Chloroplast outer membrane</location>
    </subcellularLocation>
</comment>
<comment type="alternative products">
    <event type="alternative splicing"/>
    <isoform>
        <id>Q9S7D1-1</id>
        <name>1</name>
        <sequence type="displayed"/>
    </isoform>
    <isoform>
        <id>Q9S7D1-2</id>
        <name>2</name>
        <sequence type="described" ref="VSP_022342"/>
    </isoform>
</comment>
<comment type="induction">
    <text evidence="6">6-fold up-regulation by phosphate deficiency.</text>
</comment>
<comment type="disruption phenotype">
    <text evidence="4 9">Altered thylakoid membrane lipid composition and stunted phenotype; this phenotype is reversed by the dgs1-1 gain-of-function mutation.</text>
</comment>
<comment type="similarity">
    <text evidence="11">Belongs to the glycosyltransferase group 1 family. Glycosyltransferase 4 subfamily.</text>
</comment>
<proteinExistence type="evidence at protein level"/>
<organism>
    <name type="scientific">Arabidopsis thaliana</name>
    <name type="common">Mouse-ear cress</name>
    <dbReference type="NCBI Taxonomy" id="3702"/>
    <lineage>
        <taxon>Eukaryota</taxon>
        <taxon>Viridiplantae</taxon>
        <taxon>Streptophyta</taxon>
        <taxon>Embryophyta</taxon>
        <taxon>Tracheophyta</taxon>
        <taxon>Spermatophyta</taxon>
        <taxon>Magnoliopsida</taxon>
        <taxon>eudicotyledons</taxon>
        <taxon>Gunneridae</taxon>
        <taxon>Pentapetalae</taxon>
        <taxon>rosids</taxon>
        <taxon>malvids</taxon>
        <taxon>Brassicales</taxon>
        <taxon>Brassicaceae</taxon>
        <taxon>Camelineae</taxon>
        <taxon>Arabidopsis</taxon>
    </lineage>
</organism>
<accession>Q9S7D1</accession>
<accession>Q3EB81</accession>
<accession>W8PUU5</accession>
<gene>
    <name evidence="10" type="primary">DGD1</name>
    <name evidence="12" type="ordered locus">At3g11670</name>
    <name evidence="13" type="ORF">T19F11.7</name>
</gene>
<name>DGDG1_ARATH</name>
<protein>
    <recommendedName>
        <fullName evidence="10">Digalactosyldiacylglycerol synthase 1, chloroplastic</fullName>
        <ecNumber evidence="1">2.4.1.241</ecNumber>
    </recommendedName>
</protein>
<feature type="transit peptide" description="Chloroplast" evidence="2">
    <location>
        <begin position="1"/>
        <end position="58"/>
    </location>
</feature>
<feature type="chain" id="PRO_0000252337" description="Digalactosyldiacylglycerol synthase 1, chloroplastic">
    <location>
        <begin position="59"/>
        <end position="808"/>
    </location>
</feature>
<feature type="region of interest" description="Disordered" evidence="3">
    <location>
        <begin position="1"/>
        <end position="23"/>
    </location>
</feature>
<feature type="compositionally biased region" description="Low complexity" evidence="3">
    <location>
        <begin position="10"/>
        <end position="23"/>
    </location>
</feature>
<feature type="splice variant" id="VSP_022342" description="In isoform 2." evidence="11">
    <location>
        <begin position="640"/>
        <end position="808"/>
    </location>
</feature>
<feature type="mutagenesis site" description="In dgd1-1; altered thylakoid membrane lipid composition and stunted phenotype." evidence="4">
    <location>
        <begin position="640"/>
        <end position="808"/>
    </location>
</feature>